<feature type="chain" id="PRO_0000146737" description="RNA polymerase II elongation factor ELL3">
    <location>
        <begin position="1"/>
        <end position="395"/>
    </location>
</feature>
<feature type="domain" description="OCEL" evidence="3">
    <location>
        <begin position="283"/>
        <end position="393"/>
    </location>
</feature>
<feature type="region of interest" description="Disordered" evidence="4">
    <location>
        <begin position="129"/>
        <end position="177"/>
    </location>
</feature>
<feature type="region of interest" description="Disordered" evidence="4">
    <location>
        <begin position="189"/>
        <end position="281"/>
    </location>
</feature>
<feature type="compositionally biased region" description="Acidic residues" evidence="4">
    <location>
        <begin position="243"/>
        <end position="260"/>
    </location>
</feature>
<feature type="compositionally biased region" description="Low complexity" evidence="4">
    <location>
        <begin position="269"/>
        <end position="279"/>
    </location>
</feature>
<feature type="modified residue" description="Phosphoserine" evidence="2">
    <location>
        <position position="242"/>
    </location>
</feature>
<dbReference type="EMBL" id="AL845466">
    <property type="status" value="NOT_ANNOTATED_CDS"/>
    <property type="molecule type" value="Genomic_DNA"/>
</dbReference>
<dbReference type="EMBL" id="BC045151">
    <property type="protein sequence ID" value="AAH45151.1"/>
    <property type="molecule type" value="mRNA"/>
</dbReference>
<dbReference type="CCDS" id="CCDS16644.1"/>
<dbReference type="RefSeq" id="NP_666085.2">
    <property type="nucleotide sequence ID" value="NM_145973.2"/>
</dbReference>
<dbReference type="SMR" id="Q80VR2"/>
<dbReference type="BioGRID" id="234639">
    <property type="interactions" value="2"/>
</dbReference>
<dbReference type="FunCoup" id="Q80VR2">
    <property type="interactions" value="259"/>
</dbReference>
<dbReference type="STRING" id="10090.ENSMUSP00000028679"/>
<dbReference type="PhosphoSitePlus" id="Q80VR2"/>
<dbReference type="PaxDb" id="10090-ENSMUSP00000028679"/>
<dbReference type="PeptideAtlas" id="Q80VR2"/>
<dbReference type="ProteomicsDB" id="277782"/>
<dbReference type="Antibodypedia" id="24110">
    <property type="antibodies" value="125 antibodies from 20 providers"/>
</dbReference>
<dbReference type="DNASU" id="269344"/>
<dbReference type="Ensembl" id="ENSMUST00000028679.11">
    <property type="protein sequence ID" value="ENSMUSP00000028679.5"/>
    <property type="gene ID" value="ENSMUSG00000027246.13"/>
</dbReference>
<dbReference type="Ensembl" id="ENSMUST00000116432.2">
    <property type="protein sequence ID" value="ENSMUSP00000112133.2"/>
    <property type="gene ID" value="ENSMUSG00000027246.13"/>
</dbReference>
<dbReference type="GeneID" id="269344"/>
<dbReference type="KEGG" id="mmu:269344"/>
<dbReference type="UCSC" id="uc008lzc.1">
    <property type="organism name" value="mouse"/>
</dbReference>
<dbReference type="AGR" id="MGI:2673679"/>
<dbReference type="CTD" id="80237"/>
<dbReference type="MGI" id="MGI:2673679">
    <property type="gene designation" value="Ell3"/>
</dbReference>
<dbReference type="VEuPathDB" id="HostDB:ENSMUSG00000027246"/>
<dbReference type="eggNOG" id="KOG4796">
    <property type="taxonomic scope" value="Eukaryota"/>
</dbReference>
<dbReference type="GeneTree" id="ENSGT00940000161615"/>
<dbReference type="HOGENOM" id="CLU_692530_0_0_1"/>
<dbReference type="InParanoid" id="Q80VR2"/>
<dbReference type="OMA" id="SWQNTGN"/>
<dbReference type="OrthoDB" id="6284217at2759"/>
<dbReference type="PhylomeDB" id="Q80VR2"/>
<dbReference type="TreeFam" id="TF337345"/>
<dbReference type="Reactome" id="R-MMU-6807505">
    <property type="pathway name" value="RNA polymerase II transcribes snRNA genes"/>
</dbReference>
<dbReference type="BioGRID-ORCS" id="269344">
    <property type="hits" value="3 hits in 78 CRISPR screens"/>
</dbReference>
<dbReference type="ChiTaRS" id="Ell3">
    <property type="organism name" value="mouse"/>
</dbReference>
<dbReference type="PRO" id="PR:Q80VR2"/>
<dbReference type="Proteomes" id="UP000000589">
    <property type="component" value="Chromosome 2"/>
</dbReference>
<dbReference type="RNAct" id="Q80VR2">
    <property type="molecule type" value="protein"/>
</dbReference>
<dbReference type="Bgee" id="ENSMUSG00000027246">
    <property type="expression patterns" value="Expressed in spleen and 65 other cell types or tissues"/>
</dbReference>
<dbReference type="GO" id="GO:0030054">
    <property type="term" value="C:cell junction"/>
    <property type="evidence" value="ECO:0007669"/>
    <property type="project" value="Ensembl"/>
</dbReference>
<dbReference type="GO" id="GO:0005694">
    <property type="term" value="C:chromosome"/>
    <property type="evidence" value="ECO:0007669"/>
    <property type="project" value="Ensembl"/>
</dbReference>
<dbReference type="GO" id="GO:0005829">
    <property type="term" value="C:cytosol"/>
    <property type="evidence" value="ECO:0007669"/>
    <property type="project" value="Ensembl"/>
</dbReference>
<dbReference type="GO" id="GO:0016607">
    <property type="term" value="C:nuclear speck"/>
    <property type="evidence" value="ECO:0007669"/>
    <property type="project" value="Ensembl"/>
</dbReference>
<dbReference type="GO" id="GO:0005730">
    <property type="term" value="C:nucleolus"/>
    <property type="evidence" value="ECO:0007669"/>
    <property type="project" value="Ensembl"/>
</dbReference>
<dbReference type="GO" id="GO:0005634">
    <property type="term" value="C:nucleus"/>
    <property type="evidence" value="ECO:0000314"/>
    <property type="project" value="UniProtKB"/>
</dbReference>
<dbReference type="GO" id="GO:0008023">
    <property type="term" value="C:transcription elongation factor complex"/>
    <property type="evidence" value="ECO:0000250"/>
    <property type="project" value="UniProtKB"/>
</dbReference>
<dbReference type="GO" id="GO:0000987">
    <property type="term" value="F:cis-regulatory region sequence-specific DNA binding"/>
    <property type="evidence" value="ECO:0000314"/>
    <property type="project" value="UniProtKB"/>
</dbReference>
<dbReference type="GO" id="GO:0042771">
    <property type="term" value="P:intrinsic apoptotic signaling pathway in response to DNA damage by p53 class mediator"/>
    <property type="evidence" value="ECO:0000315"/>
    <property type="project" value="MGI"/>
</dbReference>
<dbReference type="GO" id="GO:1902166">
    <property type="term" value="P:negative regulation of intrinsic apoptotic signaling pathway in response to DNA damage by p53 class mediator"/>
    <property type="evidence" value="ECO:0000315"/>
    <property type="project" value="MGI"/>
</dbReference>
<dbReference type="GO" id="GO:1901797">
    <property type="term" value="P:negative regulation of signal transduction by p53 class mediator"/>
    <property type="evidence" value="ECO:0000314"/>
    <property type="project" value="MGI"/>
</dbReference>
<dbReference type="GO" id="GO:0061351">
    <property type="term" value="P:neural precursor cell proliferation"/>
    <property type="evidence" value="ECO:0000314"/>
    <property type="project" value="MGI"/>
</dbReference>
<dbReference type="GO" id="GO:0032786">
    <property type="term" value="P:positive regulation of DNA-templated transcription, elongation"/>
    <property type="evidence" value="ECO:0007669"/>
    <property type="project" value="Ensembl"/>
</dbReference>
<dbReference type="GO" id="GO:2000179">
    <property type="term" value="P:positive regulation of neural precursor cell proliferation"/>
    <property type="evidence" value="ECO:0000314"/>
    <property type="project" value="MGI"/>
</dbReference>
<dbReference type="GO" id="GO:0050769">
    <property type="term" value="P:positive regulation of neurogenesis"/>
    <property type="evidence" value="ECO:0000314"/>
    <property type="project" value="MGI"/>
</dbReference>
<dbReference type="GO" id="GO:2000648">
    <property type="term" value="P:positive regulation of stem cell proliferation"/>
    <property type="evidence" value="ECO:0000314"/>
    <property type="project" value="MGI"/>
</dbReference>
<dbReference type="GO" id="GO:0045944">
    <property type="term" value="P:positive regulation of transcription by RNA polymerase II"/>
    <property type="evidence" value="ECO:0000315"/>
    <property type="project" value="UniProtKB"/>
</dbReference>
<dbReference type="GO" id="GO:0010717">
    <property type="term" value="P:regulation of epithelial to mesenchymal transition"/>
    <property type="evidence" value="ECO:0000315"/>
    <property type="project" value="UniProtKB"/>
</dbReference>
<dbReference type="GO" id="GO:0072331">
    <property type="term" value="P:signal transduction by p53 class mediator"/>
    <property type="evidence" value="ECO:0000314"/>
    <property type="project" value="MGI"/>
</dbReference>
<dbReference type="GO" id="GO:0042795">
    <property type="term" value="P:snRNA transcription by RNA polymerase II"/>
    <property type="evidence" value="ECO:0000250"/>
    <property type="project" value="UniProtKB"/>
</dbReference>
<dbReference type="GO" id="GO:0048863">
    <property type="term" value="P:stem cell differentiation"/>
    <property type="evidence" value="ECO:0000315"/>
    <property type="project" value="UniProtKB"/>
</dbReference>
<dbReference type="GO" id="GO:0072089">
    <property type="term" value="P:stem cell proliferation"/>
    <property type="evidence" value="ECO:0000314"/>
    <property type="project" value="MGI"/>
</dbReference>
<dbReference type="GO" id="GO:0006366">
    <property type="term" value="P:transcription by RNA polymerase II"/>
    <property type="evidence" value="ECO:0000315"/>
    <property type="project" value="UniProtKB"/>
</dbReference>
<dbReference type="GO" id="GO:0006368">
    <property type="term" value="P:transcription elongation by RNA polymerase II"/>
    <property type="evidence" value="ECO:0007669"/>
    <property type="project" value="Ensembl"/>
</dbReference>
<dbReference type="Gene3D" id="6.10.140.340">
    <property type="match status" value="1"/>
</dbReference>
<dbReference type="InterPro" id="IPR031176">
    <property type="entry name" value="ELL/occludin"/>
</dbReference>
<dbReference type="InterPro" id="IPR019464">
    <property type="entry name" value="ELL_N"/>
</dbReference>
<dbReference type="InterPro" id="IPR010844">
    <property type="entry name" value="Occludin_ELL"/>
</dbReference>
<dbReference type="PANTHER" id="PTHR23288">
    <property type="entry name" value="OCCLUDIN AND RNA POLYMERASE II ELONGATION FACTOR ELL"/>
    <property type="match status" value="1"/>
</dbReference>
<dbReference type="PANTHER" id="PTHR23288:SF18">
    <property type="entry name" value="RNA POLYMERASE II ELONGATION FACTOR ELL3"/>
    <property type="match status" value="1"/>
</dbReference>
<dbReference type="Pfam" id="PF10390">
    <property type="entry name" value="ELL"/>
    <property type="match status" value="1"/>
</dbReference>
<dbReference type="Pfam" id="PF07303">
    <property type="entry name" value="Occludin_ELL"/>
    <property type="match status" value="1"/>
</dbReference>
<dbReference type="SUPFAM" id="SSF144292">
    <property type="entry name" value="occludin/ELL-like"/>
    <property type="match status" value="1"/>
</dbReference>
<dbReference type="PROSITE" id="PS51980">
    <property type="entry name" value="OCEL"/>
    <property type="match status" value="1"/>
</dbReference>
<accession>Q80VR2</accession>
<accession>A2ARQ1</accession>
<proteinExistence type="evidence at protein level"/>
<name>ELL3_MOUSE</name>
<protein>
    <recommendedName>
        <fullName>RNA polymerase II elongation factor ELL3</fullName>
    </recommendedName>
</protein>
<comment type="function">
    <text evidence="6 7">Enhancer-binding elongation factor that specifically binds enhancers in embryonic stem cells (ES cells), marks them, and is required for their future activation during stem cell specification. Elongation factor component of the super elongation complex (SEC), a complex required to increase the catalytic rate of RNA polymerase II transcription by suppressing transient pausing by the polymerase at multiple sites along the DNA. Component of the little elongation complex (LEC), a complex required to regulate small nuclear RNA (snRNA) gene transcription by RNA polymerase II and III. Does not only bind to enhancer regions of active genes, but also marks the enhancers that are in a poised or inactive state in ES cells and is required for establishing proper RNA polymerase II occupancy at developmentally regulated genes in a cohesin-dependent manner. Probably required for priming developmentally regulated genes for later recruitment of the super elongation complex (SEC), for transcriptional activation during differentiation. Required for recruitment of P-TEFb within SEC during differentiation. Probably preloaded on germ cell chromatin, suggesting that it may prime gene activation by marking enhancers as early as in the germ cells. Promoting epithelial-mesenchymal transition (EMT).</text>
</comment>
<comment type="subunit">
    <text evidence="1 5 7">Component of the little elongation complex (LEC), at least composed of ELL (ELL, ELL2 or ELL3), ZC3H8, ICE1 and ICE2 (By similarity). Component of the super elongation complex (SEC), at least composed of EAF1, EAF2, CDK9, MLLT3/AF9, AFF (AFF1 or AFF4), the P-TEFb complex and ELL (ELL, ELL2 or ELL3). Interacts with AFF4.</text>
</comment>
<comment type="subcellular location">
    <subcellularLocation>
        <location evidence="7">Nucleus</location>
    </subcellularLocation>
</comment>
<comment type="tissue specificity">
    <text evidence="6">Actively expressed in embryonic stem cells (ES cells), while it is weakly expressed in differentiated cells.</text>
</comment>
<comment type="similarity">
    <text evidence="8">Belongs to the ELL/occludin family.</text>
</comment>
<sequence length="395" mass="44762">MEGTQEALSGKMRLLFTPAARTSLLMLRLNEAALRALQECQQQQVRPVIAFQGHRGYLRFPGPGWSCLFSFIVSQCGQEGTNGGLDLVYQRLGRSGPNCLHCLGSLRERLTIWAAMDTIPAPLLAQEHLTEGTRESESWQDTGDEPEGHPQLAPDEVSDPLASHHEQSLPGSSSEPMAQWEMRNHTYLPSREPDQSLLSPASQKRLDKKRSAPITTEEPEEKRLRALPLASSPLQGLANQDSQEGEDWGQDEDEEGDEDGDSRLEQSLSAPSASESPSPEEVPDYLLQYRAIHSTEQQQAYEQDFETDYAEYRILHARVGAASQRFTELGAEIKRLQRGTPEHKVLEDKIVQEYKKFRKRYPSYREEKHRCEYLHQKLSHIKGLILEFEEKNRGS</sequence>
<reference key="1">
    <citation type="journal article" date="2009" name="PLoS Biol.">
        <title>Lineage-specific biology revealed by a finished genome assembly of the mouse.</title>
        <authorList>
            <person name="Church D.M."/>
            <person name="Goodstadt L."/>
            <person name="Hillier L.W."/>
            <person name="Zody M.C."/>
            <person name="Goldstein S."/>
            <person name="She X."/>
            <person name="Bult C.J."/>
            <person name="Agarwala R."/>
            <person name="Cherry J.L."/>
            <person name="DiCuccio M."/>
            <person name="Hlavina W."/>
            <person name="Kapustin Y."/>
            <person name="Meric P."/>
            <person name="Maglott D."/>
            <person name="Birtle Z."/>
            <person name="Marques A.C."/>
            <person name="Graves T."/>
            <person name="Zhou S."/>
            <person name="Teague B."/>
            <person name="Potamousis K."/>
            <person name="Churas C."/>
            <person name="Place M."/>
            <person name="Herschleb J."/>
            <person name="Runnheim R."/>
            <person name="Forrest D."/>
            <person name="Amos-Landgraf J."/>
            <person name="Schwartz D.C."/>
            <person name="Cheng Z."/>
            <person name="Lindblad-Toh K."/>
            <person name="Eichler E.E."/>
            <person name="Ponting C.P."/>
        </authorList>
    </citation>
    <scope>NUCLEOTIDE SEQUENCE [LARGE SCALE GENOMIC DNA]</scope>
    <source>
        <strain>C57BL/6J</strain>
    </source>
</reference>
<reference evidence="8" key="2">
    <citation type="journal article" date="2004" name="Genome Res.">
        <title>The status, quality, and expansion of the NIH full-length cDNA project: the Mammalian Gene Collection (MGC).</title>
        <authorList>
            <consortium name="The MGC Project Team"/>
        </authorList>
    </citation>
    <scope>NUCLEOTIDE SEQUENCE [LARGE SCALE MRNA]</scope>
    <source>
        <tissue evidence="9">Olfactory epithelium</tissue>
    </source>
</reference>
<reference key="3">
    <citation type="journal article" date="2010" name="Mol. Cell">
        <title>AFF4, a component of the ELL/P-TEFb elongation complex and a shared subunit of MLL chimeras, can link transcription elongation to leukemia.</title>
        <authorList>
            <person name="Lin C."/>
            <person name="Smith E.R."/>
            <person name="Takahashi H."/>
            <person name="Lai K.C."/>
            <person name="Martin-Brown S."/>
            <person name="Florens L."/>
            <person name="Washburn M.P."/>
            <person name="Conaway J.W."/>
            <person name="Conaway R.C."/>
            <person name="Shilatifard A."/>
        </authorList>
    </citation>
    <scope>INTERACTION WITH AFF4</scope>
</reference>
<reference key="4">
    <citation type="journal article" date="2012" name="PLoS ONE">
        <title>Ell3 enhances differentiation of mouse embryonic stem cells by regulating epithelial-mesenchymal transition and apoptosis.</title>
        <authorList>
            <person name="Ahn H.J."/>
            <person name="Cha Y."/>
            <person name="Moon S.H."/>
            <person name="Jung J.E."/>
            <person name="Park K.S."/>
        </authorList>
    </citation>
    <scope>FUNCTION</scope>
    <scope>TISSUE SPECIFICITY</scope>
</reference>
<reference key="5">
    <citation type="journal article" date="2013" name="Cell">
        <title>The RNA Pol II elongation factor Ell3 marks enhancers in ES cells and primes future gene activation.</title>
        <authorList>
            <person name="Lin C."/>
            <person name="Garruss A.S."/>
            <person name="Luo Z."/>
            <person name="Guo F."/>
            <person name="Shilatifard A."/>
        </authorList>
    </citation>
    <scope>FUNCTION</scope>
    <scope>SUBCELLULAR LOCATION</scope>
    <scope>INTERACTION WITH AFF4</scope>
</reference>
<gene>
    <name type="primary">Ell3</name>
</gene>
<keyword id="KW-0539">Nucleus</keyword>
<keyword id="KW-0597">Phosphoprotein</keyword>
<keyword id="KW-1185">Reference proteome</keyword>
<keyword id="KW-0804">Transcription</keyword>
<keyword id="KW-0805">Transcription regulation</keyword>
<evidence type="ECO:0000250" key="1"/>
<evidence type="ECO:0000250" key="2">
    <source>
        <dbReference type="UniProtKB" id="Q5XFX8"/>
    </source>
</evidence>
<evidence type="ECO:0000255" key="3">
    <source>
        <dbReference type="PROSITE-ProRule" id="PRU01324"/>
    </source>
</evidence>
<evidence type="ECO:0000256" key="4">
    <source>
        <dbReference type="SAM" id="MobiDB-lite"/>
    </source>
</evidence>
<evidence type="ECO:0000269" key="5">
    <source>
    </source>
</evidence>
<evidence type="ECO:0000269" key="6">
    <source>
    </source>
</evidence>
<evidence type="ECO:0000269" key="7">
    <source>
    </source>
</evidence>
<evidence type="ECO:0000305" key="8"/>
<evidence type="ECO:0000312" key="9">
    <source>
        <dbReference type="EMBL" id="AAH45151.1"/>
    </source>
</evidence>
<organism evidence="9">
    <name type="scientific">Mus musculus</name>
    <name type="common">Mouse</name>
    <dbReference type="NCBI Taxonomy" id="10090"/>
    <lineage>
        <taxon>Eukaryota</taxon>
        <taxon>Metazoa</taxon>
        <taxon>Chordata</taxon>
        <taxon>Craniata</taxon>
        <taxon>Vertebrata</taxon>
        <taxon>Euteleostomi</taxon>
        <taxon>Mammalia</taxon>
        <taxon>Eutheria</taxon>
        <taxon>Euarchontoglires</taxon>
        <taxon>Glires</taxon>
        <taxon>Rodentia</taxon>
        <taxon>Myomorpha</taxon>
        <taxon>Muroidea</taxon>
        <taxon>Muridae</taxon>
        <taxon>Murinae</taxon>
        <taxon>Mus</taxon>
        <taxon>Mus</taxon>
    </lineage>
</organism>